<comment type="function">
    <text evidence="1">Together with BCKDHA forms the heterotetrameric E1 subunit of the mitochondrial branched-chain alpha-ketoacid dehydrogenase (BCKD) complex. The BCKD complex catalyzes the multi-step oxidative decarboxylation of alpha-ketoacids derived from the branched-chain amino-acids valine, leucine and isoleucine producing CO2 and acyl-CoA which is subsequently utilized to produce energy. The E1 subunit catalyzes the first step with the decarboxylation of the alpha-ketoacid forming an enzyme-product intermediate. A reductive acylation mediated by the lipoylamide cofactor of E2 extracts the acyl group from the E1 active site for the next step of the reaction.</text>
</comment>
<comment type="catalytic activity">
    <reaction evidence="1">
        <text>N(6)-[(R)-lipoyl]-L-lysyl-[protein] + 3-methyl-2-oxobutanoate + H(+) = N(6)-[(R)-S(8)-2-methylpropanoyldihydrolipoyl]-L-lysyl-[protein] + CO2</text>
        <dbReference type="Rhea" id="RHEA:13457"/>
        <dbReference type="Rhea" id="RHEA-COMP:10474"/>
        <dbReference type="Rhea" id="RHEA-COMP:10497"/>
        <dbReference type="ChEBI" id="CHEBI:11851"/>
        <dbReference type="ChEBI" id="CHEBI:15378"/>
        <dbReference type="ChEBI" id="CHEBI:16526"/>
        <dbReference type="ChEBI" id="CHEBI:83099"/>
        <dbReference type="ChEBI" id="CHEBI:83142"/>
        <dbReference type="EC" id="1.2.4.4"/>
    </reaction>
    <physiologicalReaction direction="left-to-right" evidence="1">
        <dbReference type="Rhea" id="RHEA:13458"/>
    </physiologicalReaction>
</comment>
<comment type="cofactor">
    <cofactor evidence="1">
        <name>thiamine diphosphate</name>
        <dbReference type="ChEBI" id="CHEBI:58937"/>
    </cofactor>
</comment>
<comment type="subunit">
    <text evidence="1">Heterotetramer of 2 alpha/BCKDHA and 2 beta chains/BCKDHB that forms the branched-chain alpha-keto acid decarboxylase (E1) component of the BCKD complex. The branched-chain alpha-ketoacid dehydrogenase is a large complex composed of three major building blocks E1, E2 and E3. It is organized around E2, a 24-meric cubic core composed of DBT, to which are associated 6 to 12 copies of E1, and approximately 6 copies of the dehydrogenase E3, a DLD dimer.</text>
</comment>
<comment type="subcellular location">
    <subcellularLocation>
        <location evidence="1">Mitochondrion matrix</location>
    </subcellularLocation>
</comment>
<comment type="sequence caution" evidence="4">
    <conflict type="frameshift">
        <sequence resource="EMBL-CDS" id="AAA73899"/>
    </conflict>
</comment>
<comment type="sequence caution" evidence="4">
    <conflict type="miscellaneous discrepancy">
        <sequence resource="EMBL-CDS" id="AAA73899"/>
    </conflict>
    <text>Contaminating sequence. Sequence of unknown origin in the N-terminal part.</text>
</comment>
<organism>
    <name type="scientific">Rattus norvegicus</name>
    <name type="common">Rat</name>
    <dbReference type="NCBI Taxonomy" id="10116"/>
    <lineage>
        <taxon>Eukaryota</taxon>
        <taxon>Metazoa</taxon>
        <taxon>Chordata</taxon>
        <taxon>Craniata</taxon>
        <taxon>Vertebrata</taxon>
        <taxon>Euteleostomi</taxon>
        <taxon>Mammalia</taxon>
        <taxon>Eutheria</taxon>
        <taxon>Euarchontoglires</taxon>
        <taxon>Glires</taxon>
        <taxon>Rodentia</taxon>
        <taxon>Myomorpha</taxon>
        <taxon>Muroidea</taxon>
        <taxon>Muridae</taxon>
        <taxon>Murinae</taxon>
        <taxon>Rattus</taxon>
    </lineage>
</organism>
<accession>P35738</accession>
<dbReference type="EC" id="1.2.4.4" evidence="1"/>
<dbReference type="EMBL" id="AABR03062593">
    <property type="status" value="NOT_ANNOTATED_CDS"/>
    <property type="molecule type" value="Genomic_DNA"/>
</dbReference>
<dbReference type="EMBL" id="AABR03062720">
    <property type="status" value="NOT_ANNOTATED_CDS"/>
    <property type="molecule type" value="Genomic_DNA"/>
</dbReference>
<dbReference type="EMBL" id="AABR03063125">
    <property type="status" value="NOT_ANNOTATED_CDS"/>
    <property type="molecule type" value="Genomic_DNA"/>
</dbReference>
<dbReference type="EMBL" id="AABR03063398">
    <property type="status" value="NOT_ANNOTATED_CDS"/>
    <property type="molecule type" value="Genomic_DNA"/>
</dbReference>
<dbReference type="EMBL" id="M94040">
    <property type="protein sequence ID" value="AAA73899.1"/>
    <property type="status" value="ALT_SEQ"/>
    <property type="molecule type" value="mRNA"/>
</dbReference>
<dbReference type="PIR" id="S28950">
    <property type="entry name" value="S28950"/>
</dbReference>
<dbReference type="RefSeq" id="NP_062140.1">
    <property type="nucleotide sequence ID" value="NM_019267.1"/>
</dbReference>
<dbReference type="SMR" id="P35738"/>
<dbReference type="BioGRID" id="248328">
    <property type="interactions" value="2"/>
</dbReference>
<dbReference type="CORUM" id="P35738"/>
<dbReference type="FunCoup" id="P35738">
    <property type="interactions" value="1135"/>
</dbReference>
<dbReference type="IntAct" id="P35738">
    <property type="interactions" value="1"/>
</dbReference>
<dbReference type="STRING" id="10116.ENSRNOP00000013249"/>
<dbReference type="PhosphoSitePlus" id="P35738"/>
<dbReference type="PaxDb" id="10116-ENSRNOP00000013249"/>
<dbReference type="Ensembl" id="ENSRNOT00000013249.7">
    <property type="protein sequence ID" value="ENSRNOP00000013249.7"/>
    <property type="gene ID" value="ENSRNOG00000009928.7"/>
</dbReference>
<dbReference type="GeneID" id="29711"/>
<dbReference type="KEGG" id="rno:29711"/>
<dbReference type="UCSC" id="RGD:2197">
    <property type="organism name" value="rat"/>
</dbReference>
<dbReference type="AGR" id="RGD:2197"/>
<dbReference type="CTD" id="594"/>
<dbReference type="RGD" id="2197">
    <property type="gene designation" value="Bckdhb"/>
</dbReference>
<dbReference type="eggNOG" id="KOG0525">
    <property type="taxonomic scope" value="Eukaryota"/>
</dbReference>
<dbReference type="GeneTree" id="ENSGT00940000156533"/>
<dbReference type="InParanoid" id="P35738"/>
<dbReference type="OMA" id="SEAYYMA"/>
<dbReference type="OrthoDB" id="878at2759"/>
<dbReference type="PhylomeDB" id="P35738"/>
<dbReference type="TreeFam" id="TF105947"/>
<dbReference type="BRENDA" id="1.2.4.4">
    <property type="organism ID" value="5301"/>
</dbReference>
<dbReference type="Reactome" id="R-RNO-70895">
    <property type="pathway name" value="Branched-chain amino acid catabolism"/>
</dbReference>
<dbReference type="Reactome" id="R-RNO-9859138">
    <property type="pathway name" value="BCKDH synthesizes BCAA-CoA from KIC, KMVA, KIV"/>
</dbReference>
<dbReference type="SABIO-RK" id="P35738"/>
<dbReference type="PRO" id="PR:P35738"/>
<dbReference type="Proteomes" id="UP000002494">
    <property type="component" value="Chromosome 8"/>
</dbReference>
<dbReference type="GO" id="GO:0160157">
    <property type="term" value="C:branched-chain alpha-ketoacid dehydrogenase complex"/>
    <property type="evidence" value="ECO:0000250"/>
    <property type="project" value="UniProtKB"/>
</dbReference>
<dbReference type="GO" id="GO:0005759">
    <property type="term" value="C:mitochondrial matrix"/>
    <property type="evidence" value="ECO:0007669"/>
    <property type="project" value="UniProtKB-SubCell"/>
</dbReference>
<dbReference type="GO" id="GO:0005739">
    <property type="term" value="C:mitochondrion"/>
    <property type="evidence" value="ECO:0000250"/>
    <property type="project" value="UniProtKB"/>
</dbReference>
<dbReference type="GO" id="GO:0003863">
    <property type="term" value="F:3-methyl-2-oxobutanoate dehydrogenase (2-methylpropanoyl-transferring) activity"/>
    <property type="evidence" value="ECO:0000266"/>
    <property type="project" value="RGD"/>
</dbReference>
<dbReference type="GO" id="GO:0046872">
    <property type="term" value="F:metal ion binding"/>
    <property type="evidence" value="ECO:0007669"/>
    <property type="project" value="UniProtKB-KW"/>
</dbReference>
<dbReference type="GO" id="GO:0044877">
    <property type="term" value="F:protein-containing complex binding"/>
    <property type="evidence" value="ECO:0000353"/>
    <property type="project" value="RGD"/>
</dbReference>
<dbReference type="GO" id="GO:0009083">
    <property type="term" value="P:branched-chain amino acid catabolic process"/>
    <property type="evidence" value="ECO:0000250"/>
    <property type="project" value="UniProtKB"/>
</dbReference>
<dbReference type="GO" id="GO:0006629">
    <property type="term" value="P:lipid metabolic process"/>
    <property type="evidence" value="ECO:0007669"/>
    <property type="project" value="UniProtKB-KW"/>
</dbReference>
<dbReference type="GO" id="GO:0051591">
    <property type="term" value="P:response to cAMP"/>
    <property type="evidence" value="ECO:0000270"/>
    <property type="project" value="RGD"/>
</dbReference>
<dbReference type="GO" id="GO:0051384">
    <property type="term" value="P:response to glucocorticoid"/>
    <property type="evidence" value="ECO:0000270"/>
    <property type="project" value="RGD"/>
</dbReference>
<dbReference type="GO" id="GO:0007584">
    <property type="term" value="P:response to nutrient"/>
    <property type="evidence" value="ECO:0000270"/>
    <property type="project" value="RGD"/>
</dbReference>
<dbReference type="CDD" id="cd07036">
    <property type="entry name" value="TPP_PYR_E1-PDHc-beta_like"/>
    <property type="match status" value="1"/>
</dbReference>
<dbReference type="FunFam" id="3.40.50.920:FF:000004">
    <property type="entry name" value="2-oxoisovalerate dehydrogenase subunit beta 1, mitochondrial"/>
    <property type="match status" value="1"/>
</dbReference>
<dbReference type="FunFam" id="3.40.50.970:FF:000001">
    <property type="entry name" value="Pyruvate dehydrogenase E1 beta subunit"/>
    <property type="match status" value="1"/>
</dbReference>
<dbReference type="Gene3D" id="3.40.50.920">
    <property type="match status" value="1"/>
</dbReference>
<dbReference type="Gene3D" id="3.40.50.970">
    <property type="match status" value="1"/>
</dbReference>
<dbReference type="InterPro" id="IPR029061">
    <property type="entry name" value="THDP-binding"/>
</dbReference>
<dbReference type="InterPro" id="IPR009014">
    <property type="entry name" value="Transketo_C/PFOR_II"/>
</dbReference>
<dbReference type="InterPro" id="IPR005475">
    <property type="entry name" value="Transketolase-like_Pyr-bd"/>
</dbReference>
<dbReference type="InterPro" id="IPR033248">
    <property type="entry name" value="Transketolase_C"/>
</dbReference>
<dbReference type="PANTHER" id="PTHR42980:SF1">
    <property type="entry name" value="2-OXOISOVALERATE DEHYDROGENASE SUBUNIT BETA, MITOCHONDRIAL"/>
    <property type="match status" value="1"/>
</dbReference>
<dbReference type="PANTHER" id="PTHR42980">
    <property type="entry name" value="2-OXOISOVALERATE DEHYDROGENASE SUBUNIT BETA-RELATED"/>
    <property type="match status" value="1"/>
</dbReference>
<dbReference type="Pfam" id="PF02779">
    <property type="entry name" value="Transket_pyr"/>
    <property type="match status" value="1"/>
</dbReference>
<dbReference type="Pfam" id="PF02780">
    <property type="entry name" value="Transketolase_C"/>
    <property type="match status" value="1"/>
</dbReference>
<dbReference type="SMART" id="SM00861">
    <property type="entry name" value="Transket_pyr"/>
    <property type="match status" value="1"/>
</dbReference>
<dbReference type="SUPFAM" id="SSF52518">
    <property type="entry name" value="Thiamin diphosphate-binding fold (THDP-binding)"/>
    <property type="match status" value="1"/>
</dbReference>
<dbReference type="SUPFAM" id="SSF52922">
    <property type="entry name" value="TK C-terminal domain-like"/>
    <property type="match status" value="1"/>
</dbReference>
<name>ODBB_RAT</name>
<evidence type="ECO:0000250" key="1">
    <source>
        <dbReference type="UniProtKB" id="P21953"/>
    </source>
</evidence>
<evidence type="ECO:0000250" key="2">
    <source>
        <dbReference type="UniProtKB" id="Q6P3A8"/>
    </source>
</evidence>
<evidence type="ECO:0000255" key="3"/>
<evidence type="ECO:0000305" key="4"/>
<evidence type="ECO:0000312" key="5">
    <source>
        <dbReference type="RGD" id="2197"/>
    </source>
</evidence>
<feature type="transit peptide" description="Mitochondrion" evidence="3">
    <location>
        <begin position="1"/>
        <end position="48"/>
    </location>
</feature>
<feature type="chain" id="PRO_0000020471" description="2-oxoisovalerate dehydrogenase subunit beta, mitochondrial">
    <location>
        <begin position="49"/>
        <end position="390"/>
    </location>
</feature>
<feature type="binding site" evidence="1">
    <location>
        <position position="150"/>
    </location>
    <ligand>
        <name>thiamine diphosphate</name>
        <dbReference type="ChEBI" id="CHEBI:58937"/>
        <note>ligand shared with alpha subunit</note>
    </ligand>
</feature>
<feature type="binding site" evidence="1">
    <location>
        <position position="176"/>
    </location>
    <ligand>
        <name>K(+)</name>
        <dbReference type="ChEBI" id="CHEBI:29103"/>
        <note>structural</note>
    </ligand>
</feature>
<feature type="binding site" evidence="1">
    <location>
        <position position="178"/>
    </location>
    <ligand>
        <name>K(+)</name>
        <dbReference type="ChEBI" id="CHEBI:29103"/>
        <note>structural</note>
    </ligand>
</feature>
<feature type="binding site" evidence="1">
    <location>
        <position position="179"/>
    </location>
    <ligand>
        <name>K(+)</name>
        <dbReference type="ChEBI" id="CHEBI:29103"/>
        <note>structural</note>
    </ligand>
</feature>
<feature type="binding site" evidence="1">
    <location>
        <position position="226"/>
    </location>
    <ligand>
        <name>K(+)</name>
        <dbReference type="ChEBI" id="CHEBI:29103"/>
        <note>structural</note>
    </ligand>
</feature>
<feature type="binding site" evidence="1">
    <location>
        <position position="229"/>
    </location>
    <ligand>
        <name>K(+)</name>
        <dbReference type="ChEBI" id="CHEBI:29103"/>
        <note>structural</note>
    </ligand>
</feature>
<feature type="binding site" evidence="1">
    <location>
        <position position="231"/>
    </location>
    <ligand>
        <name>K(+)</name>
        <dbReference type="ChEBI" id="CHEBI:29103"/>
        <note>structural</note>
    </ligand>
</feature>
<feature type="modified residue" description="N6-acetyllysine" evidence="2">
    <location>
        <position position="230"/>
    </location>
</feature>
<feature type="modified residue" description="N6-acetyllysine" evidence="1">
    <location>
        <position position="239"/>
    </location>
</feature>
<feature type="sequence conflict" description="In Ref. 3; AAA73899." evidence="4" ref="3">
    <original>K</original>
    <variation>R</variation>
    <location>
        <position position="255"/>
    </location>
</feature>
<feature type="sequence conflict" description="In Ref. 3; AAA73899." evidence="4" ref="3">
    <original>R</original>
    <variation>T</variation>
    <location>
        <position position="303"/>
    </location>
</feature>
<reference key="1">
    <citation type="journal article" date="2004" name="Nature">
        <title>Genome sequence of the Brown Norway rat yields insights into mammalian evolution.</title>
        <authorList>
            <person name="Gibbs R.A."/>
            <person name="Weinstock G.M."/>
            <person name="Metzker M.L."/>
            <person name="Muzny D.M."/>
            <person name="Sodergren E.J."/>
            <person name="Scherer S."/>
            <person name="Scott G."/>
            <person name="Steffen D."/>
            <person name="Worley K.C."/>
            <person name="Burch P.E."/>
            <person name="Okwuonu G."/>
            <person name="Hines S."/>
            <person name="Lewis L."/>
            <person name="Deramo C."/>
            <person name="Delgado O."/>
            <person name="Dugan-Rocha S."/>
            <person name="Miner G."/>
            <person name="Morgan M."/>
            <person name="Hawes A."/>
            <person name="Gill R."/>
            <person name="Holt R.A."/>
            <person name="Adams M.D."/>
            <person name="Amanatides P.G."/>
            <person name="Baden-Tillson H."/>
            <person name="Barnstead M."/>
            <person name="Chin S."/>
            <person name="Evans C.A."/>
            <person name="Ferriera S."/>
            <person name="Fosler C."/>
            <person name="Glodek A."/>
            <person name="Gu Z."/>
            <person name="Jennings D."/>
            <person name="Kraft C.L."/>
            <person name="Nguyen T."/>
            <person name="Pfannkoch C.M."/>
            <person name="Sitter C."/>
            <person name="Sutton G.G."/>
            <person name="Venter J.C."/>
            <person name="Woodage T."/>
            <person name="Smith D."/>
            <person name="Lee H.-M."/>
            <person name="Gustafson E."/>
            <person name="Cahill P."/>
            <person name="Kana A."/>
            <person name="Doucette-Stamm L."/>
            <person name="Weinstock K."/>
            <person name="Fechtel K."/>
            <person name="Weiss R.B."/>
            <person name="Dunn D.M."/>
            <person name="Green E.D."/>
            <person name="Blakesley R.W."/>
            <person name="Bouffard G.G."/>
            <person name="De Jong P.J."/>
            <person name="Osoegawa K."/>
            <person name="Zhu B."/>
            <person name="Marra M."/>
            <person name="Schein J."/>
            <person name="Bosdet I."/>
            <person name="Fjell C."/>
            <person name="Jones S."/>
            <person name="Krzywinski M."/>
            <person name="Mathewson C."/>
            <person name="Siddiqui A."/>
            <person name="Wye N."/>
            <person name="McPherson J."/>
            <person name="Zhao S."/>
            <person name="Fraser C.M."/>
            <person name="Shetty J."/>
            <person name="Shatsman S."/>
            <person name="Geer K."/>
            <person name="Chen Y."/>
            <person name="Abramzon S."/>
            <person name="Nierman W.C."/>
            <person name="Havlak P.H."/>
            <person name="Chen R."/>
            <person name="Durbin K.J."/>
            <person name="Egan A."/>
            <person name="Ren Y."/>
            <person name="Song X.-Z."/>
            <person name="Li B."/>
            <person name="Liu Y."/>
            <person name="Qin X."/>
            <person name="Cawley S."/>
            <person name="Cooney A.J."/>
            <person name="D'Souza L.M."/>
            <person name="Martin K."/>
            <person name="Wu J.Q."/>
            <person name="Gonzalez-Garay M.L."/>
            <person name="Jackson A.R."/>
            <person name="Kalafus K.J."/>
            <person name="McLeod M.P."/>
            <person name="Milosavljevic A."/>
            <person name="Virk D."/>
            <person name="Volkov A."/>
            <person name="Wheeler D.A."/>
            <person name="Zhang Z."/>
            <person name="Bailey J.A."/>
            <person name="Eichler E.E."/>
            <person name="Tuzun E."/>
            <person name="Birney E."/>
            <person name="Mongin E."/>
            <person name="Ureta-Vidal A."/>
            <person name="Woodwark C."/>
            <person name="Zdobnov E."/>
            <person name="Bork P."/>
            <person name="Suyama M."/>
            <person name="Torrents D."/>
            <person name="Alexandersson M."/>
            <person name="Trask B.J."/>
            <person name="Young J.M."/>
            <person name="Huang H."/>
            <person name="Wang H."/>
            <person name="Xing H."/>
            <person name="Daniels S."/>
            <person name="Gietzen D."/>
            <person name="Schmidt J."/>
            <person name="Stevens K."/>
            <person name="Vitt U."/>
            <person name="Wingrove J."/>
            <person name="Camara F."/>
            <person name="Mar Alba M."/>
            <person name="Abril J.F."/>
            <person name="Guigo R."/>
            <person name="Smit A."/>
            <person name="Dubchak I."/>
            <person name="Rubin E.M."/>
            <person name="Couronne O."/>
            <person name="Poliakov A."/>
            <person name="Huebner N."/>
            <person name="Ganten D."/>
            <person name="Goesele C."/>
            <person name="Hummel O."/>
            <person name="Kreitler T."/>
            <person name="Lee Y.-A."/>
            <person name="Monti J."/>
            <person name="Schulz H."/>
            <person name="Zimdahl H."/>
            <person name="Himmelbauer H."/>
            <person name="Lehrach H."/>
            <person name="Jacob H.J."/>
            <person name="Bromberg S."/>
            <person name="Gullings-Handley J."/>
            <person name="Jensen-Seaman M.I."/>
            <person name="Kwitek A.E."/>
            <person name="Lazar J."/>
            <person name="Pasko D."/>
            <person name="Tonellato P.J."/>
            <person name="Twigger S."/>
            <person name="Ponting C.P."/>
            <person name="Duarte J.M."/>
            <person name="Rice S."/>
            <person name="Goodstadt L."/>
            <person name="Beatson S.A."/>
            <person name="Emes R.D."/>
            <person name="Winter E.E."/>
            <person name="Webber C."/>
            <person name="Brandt P."/>
            <person name="Nyakatura G."/>
            <person name="Adetobi M."/>
            <person name="Chiaromonte F."/>
            <person name="Elnitski L."/>
            <person name="Eswara P."/>
            <person name="Hardison R.C."/>
            <person name="Hou M."/>
            <person name="Kolbe D."/>
            <person name="Makova K."/>
            <person name="Miller W."/>
            <person name="Nekrutenko A."/>
            <person name="Riemer C."/>
            <person name="Schwartz S."/>
            <person name="Taylor J."/>
            <person name="Yang S."/>
            <person name="Zhang Y."/>
            <person name="Lindpaintner K."/>
            <person name="Andrews T.D."/>
            <person name="Caccamo M."/>
            <person name="Clamp M."/>
            <person name="Clarke L."/>
            <person name="Curwen V."/>
            <person name="Durbin R.M."/>
            <person name="Eyras E."/>
            <person name="Searle S.M."/>
            <person name="Cooper G.M."/>
            <person name="Batzoglou S."/>
            <person name="Brudno M."/>
            <person name="Sidow A."/>
            <person name="Stone E.A."/>
            <person name="Payseur B.A."/>
            <person name="Bourque G."/>
            <person name="Lopez-Otin C."/>
            <person name="Puente X.S."/>
            <person name="Chakrabarti K."/>
            <person name="Chatterji S."/>
            <person name="Dewey C."/>
            <person name="Pachter L."/>
            <person name="Bray N."/>
            <person name="Yap V.B."/>
            <person name="Caspi A."/>
            <person name="Tesler G."/>
            <person name="Pevzner P.A."/>
            <person name="Haussler D."/>
            <person name="Roskin K.M."/>
            <person name="Baertsch R."/>
            <person name="Clawson H."/>
            <person name="Furey T.S."/>
            <person name="Hinrichs A.S."/>
            <person name="Karolchik D."/>
            <person name="Kent W.J."/>
            <person name="Rosenbloom K.R."/>
            <person name="Trumbower H."/>
            <person name="Weirauch M."/>
            <person name="Cooper D.N."/>
            <person name="Stenson P.D."/>
            <person name="Ma B."/>
            <person name="Brent M."/>
            <person name="Arumugam M."/>
            <person name="Shteynberg D."/>
            <person name="Copley R.R."/>
            <person name="Taylor M.S."/>
            <person name="Riethman H."/>
            <person name="Mudunuri U."/>
            <person name="Peterson J."/>
            <person name="Guyer M."/>
            <person name="Felsenfeld A."/>
            <person name="Old S."/>
            <person name="Mockrin S."/>
            <person name="Collins F.S."/>
        </authorList>
    </citation>
    <scope>NUCLEOTIDE SEQUENCE [LARGE SCALE GENOMIC DNA]</scope>
    <source>
        <strain>Brown Norway</strain>
    </source>
</reference>
<reference key="2">
    <citation type="submission" date="2004-01" db="EMBL/GenBank/DDBJ databases">
        <authorList>
            <consortium name="The MGC Project Team"/>
        </authorList>
    </citation>
    <scope>NUCLEOTIDE SEQUENCE [LARGE SCALE MRNA] OF 1-230</scope>
</reference>
<reference key="3">
    <citation type="journal article" date="1992" name="Biochim. Biophys. Acta">
        <title>Molecular cloning of the E1 beta subunit of the rat branched chain alpha-ketoacid dehydrogenase.</title>
        <authorList>
            <person name="Zhao Y."/>
            <person name="Kuntz M.J."/>
            <person name="Harris R.A."/>
            <person name="Crabb D.W."/>
        </authorList>
    </citation>
    <scope>NUCLEOTIDE SEQUENCE [MRNA] OF 29-390</scope>
    <scope>PROTEIN SEQUENCE OF 49-75</scope>
</reference>
<reference key="4">
    <citation type="journal article" date="1995" name="Biochim. Biophys. Acta">
        <authorList>
            <person name="Zhao Y."/>
            <person name="Kuntz M.J."/>
            <person name="Harris R.A."/>
            <person name="Crabb D.W."/>
        </authorList>
    </citation>
    <scope>ERRATUM OF PUBMED:1390893</scope>
</reference>
<protein>
    <recommendedName>
        <fullName evidence="1">2-oxoisovalerate dehydrogenase subunit beta, mitochondrial</fullName>
        <ecNumber evidence="1">1.2.4.4</ecNumber>
    </recommendedName>
    <alternativeName>
        <fullName>Branched-chain alpha-keto acid dehydrogenase E1 component beta chain</fullName>
        <shortName>BCKDE1B</shortName>
        <shortName>BCKDH E1-beta</shortName>
    </alternativeName>
</protein>
<keyword id="KW-0007">Acetylation</keyword>
<keyword id="KW-0903">Direct protein sequencing</keyword>
<keyword id="KW-0443">Lipid metabolism</keyword>
<keyword id="KW-0479">Metal-binding</keyword>
<keyword id="KW-0496">Mitochondrion</keyword>
<keyword id="KW-0560">Oxidoreductase</keyword>
<keyword id="KW-0630">Potassium</keyword>
<keyword id="KW-1185">Reference proteome</keyword>
<keyword id="KW-0809">Transit peptide</keyword>
<sequence length="390" mass="42823">MAAVAARAGGLLRLGAAGAERRRRGLRCAALVQGFLQPAVDDASQKRRVAHFTFQPDPESLQYGQTQKMNLFQSITSALDNSLAKDPTAVIFGEDVAFGGVFRCTVGLRDKYGKDRVFNTPLCEQGIVGFGIGIAVTGATAIAEIQFADYIFPAFDQIVNEAAKYRYRSGDLFNCGSLTIRAPWGCVGHGALYHSQSPEAFFAHCPGIKVVIPRSPFQAKGLLLSCIEDKNPCIFFEPKILYRAAVEQVPVEPYKIPLSQAEVIQEGSDVTLVAWGTQVHVIREVASMAQEKLGVSCEVIDLRTIVPWDVDTVCKSVIKTGRLLISHEAPLTGGFASEISSTVQEECFLNLEAPISRVCGYDTPFPHIFEPFYIPDKWKCYDALRKMINY</sequence>
<gene>
    <name evidence="5" type="primary">Bckdhb</name>
</gene>
<proteinExistence type="evidence at protein level"/>